<comment type="function">
    <text evidence="1">Acts as a negative mediator of apoptosis.</text>
</comment>
<comment type="subcellular location">
    <subcellularLocation>
        <location evidence="1">Cytoplasm</location>
    </subcellularLocation>
</comment>
<comment type="similarity">
    <text evidence="3">Belongs to the TNFAIP8 family.</text>
</comment>
<protein>
    <recommendedName>
        <fullName>Tumor necrosis factor alpha-induced protein 8</fullName>
        <shortName>TNF alpha-induced protein 8</shortName>
    </recommendedName>
</protein>
<gene>
    <name type="primary">TNFAIP8</name>
    <name type="ORF">RCJMB04_29h8</name>
</gene>
<accession>Q5ZI78</accession>
<keyword id="KW-0053">Apoptosis</keyword>
<keyword id="KW-0175">Coiled coil</keyword>
<keyword id="KW-0963">Cytoplasm</keyword>
<keyword id="KW-1185">Reference proteome</keyword>
<proteinExistence type="evidence at transcript level"/>
<evidence type="ECO:0000250" key="1"/>
<evidence type="ECO:0000255" key="2"/>
<evidence type="ECO:0000305" key="3"/>
<name>TFIP8_CHICK</name>
<sequence length="188" mass="21776">MATDVFNSKSLAIQAQKKILGKMVSKSIATTLIDDTSSDVLDELYRVTKEYTQNKKEAEKIIKNLIKIVLKLAILYRNNQFNQDEIALMEKFKKKVHQLAKTVVSFHQVDYTFDRNFLSKLLNDCRELLHQIIQRHLTAKSHGRVNNVFDHFSDCEFLAALYNPFGPYKLHLQKLCDGVNRMLDEGNI</sequence>
<reference key="1">
    <citation type="journal article" date="2005" name="Genome Biol.">
        <title>Full-length cDNAs from chicken bursal lymphocytes to facilitate gene function analysis.</title>
        <authorList>
            <person name="Caldwell R.B."/>
            <person name="Kierzek A.M."/>
            <person name="Arakawa H."/>
            <person name="Bezzubov Y."/>
            <person name="Zaim J."/>
            <person name="Fiedler P."/>
            <person name="Kutter S."/>
            <person name="Blagodatski A."/>
            <person name="Kostovska D."/>
            <person name="Koter M."/>
            <person name="Plachy J."/>
            <person name="Carninci P."/>
            <person name="Hayashizaki Y."/>
            <person name="Buerstedde J.-M."/>
        </authorList>
    </citation>
    <scope>NUCLEOTIDE SEQUENCE [LARGE SCALE MRNA]</scope>
    <source>
        <strain>CB</strain>
        <tissue>Bursa of Fabricius</tissue>
    </source>
</reference>
<organism>
    <name type="scientific">Gallus gallus</name>
    <name type="common">Chicken</name>
    <dbReference type="NCBI Taxonomy" id="9031"/>
    <lineage>
        <taxon>Eukaryota</taxon>
        <taxon>Metazoa</taxon>
        <taxon>Chordata</taxon>
        <taxon>Craniata</taxon>
        <taxon>Vertebrata</taxon>
        <taxon>Euteleostomi</taxon>
        <taxon>Archelosauria</taxon>
        <taxon>Archosauria</taxon>
        <taxon>Dinosauria</taxon>
        <taxon>Saurischia</taxon>
        <taxon>Theropoda</taxon>
        <taxon>Coelurosauria</taxon>
        <taxon>Aves</taxon>
        <taxon>Neognathae</taxon>
        <taxon>Galloanserae</taxon>
        <taxon>Galliformes</taxon>
        <taxon>Phasianidae</taxon>
        <taxon>Phasianinae</taxon>
        <taxon>Gallus</taxon>
    </lineage>
</organism>
<dbReference type="EMBL" id="AJ720906">
    <property type="protein sequence ID" value="CAG32565.1"/>
    <property type="molecule type" value="mRNA"/>
</dbReference>
<dbReference type="RefSeq" id="NP_001026612.1">
    <property type="nucleotide sequence ID" value="NM_001031441.3"/>
</dbReference>
<dbReference type="RefSeq" id="XP_015136098.1">
    <property type="nucleotide sequence ID" value="XM_015280612.4"/>
</dbReference>
<dbReference type="RefSeq" id="XP_040511527.1">
    <property type="nucleotide sequence ID" value="XM_040655593.2"/>
</dbReference>
<dbReference type="RefSeq" id="XP_046791173.1">
    <property type="nucleotide sequence ID" value="XM_046935217.1"/>
</dbReference>
<dbReference type="RefSeq" id="XP_046791174.1">
    <property type="nucleotide sequence ID" value="XM_046935218.1"/>
</dbReference>
<dbReference type="SMR" id="Q5ZI78"/>
<dbReference type="FunCoup" id="Q5ZI78">
    <property type="interactions" value="598"/>
</dbReference>
<dbReference type="PaxDb" id="9031-ENSGALP00000041896"/>
<dbReference type="Ensembl" id="ENSGALT00010022291.1">
    <property type="protein sequence ID" value="ENSGALP00010012815.1"/>
    <property type="gene ID" value="ENSGALG00010009360.1"/>
</dbReference>
<dbReference type="Ensembl" id="ENSGALT00010022303.1">
    <property type="protein sequence ID" value="ENSGALP00010012825.1"/>
    <property type="gene ID" value="ENSGALG00010009360.1"/>
</dbReference>
<dbReference type="GeneID" id="427384"/>
<dbReference type="KEGG" id="gga:427384"/>
<dbReference type="CTD" id="25816"/>
<dbReference type="VEuPathDB" id="HostDB:geneid_427384"/>
<dbReference type="eggNOG" id="ENOG502S00N">
    <property type="taxonomic scope" value="Eukaryota"/>
</dbReference>
<dbReference type="GeneTree" id="ENSGT00390000003488"/>
<dbReference type="HOGENOM" id="CLU_085918_1_0_1"/>
<dbReference type="InParanoid" id="Q5ZI78"/>
<dbReference type="OrthoDB" id="10055976at2759"/>
<dbReference type="PhylomeDB" id="Q5ZI78"/>
<dbReference type="Reactome" id="R-GGA-1483255">
    <property type="pathway name" value="PI Metabolism"/>
</dbReference>
<dbReference type="PRO" id="PR:Q5ZI78"/>
<dbReference type="Proteomes" id="UP000000539">
    <property type="component" value="Chromosome Z"/>
</dbReference>
<dbReference type="Bgee" id="ENSGALG00000027761">
    <property type="expression patterns" value="Expressed in granulocyte and 14 other cell types or tissues"/>
</dbReference>
<dbReference type="GO" id="GO:0005737">
    <property type="term" value="C:cytoplasm"/>
    <property type="evidence" value="ECO:0000250"/>
    <property type="project" value="UniProtKB"/>
</dbReference>
<dbReference type="GO" id="GO:0043027">
    <property type="term" value="F:cysteine-type endopeptidase inhibitor activity involved in apoptotic process"/>
    <property type="evidence" value="ECO:0000250"/>
    <property type="project" value="UniProtKB"/>
</dbReference>
<dbReference type="GO" id="GO:0006915">
    <property type="term" value="P:apoptotic process"/>
    <property type="evidence" value="ECO:0007669"/>
    <property type="project" value="UniProtKB-KW"/>
</dbReference>
<dbReference type="GO" id="GO:0043065">
    <property type="term" value="P:positive regulation of apoptotic process"/>
    <property type="evidence" value="ECO:0000250"/>
    <property type="project" value="UniProtKB"/>
</dbReference>
<dbReference type="FunFam" id="1.20.1440.160:FF:000001">
    <property type="entry name" value="Tumor necrosis factor alpha-induced protein 8-like 1"/>
    <property type="match status" value="1"/>
</dbReference>
<dbReference type="Gene3D" id="1.20.1440.160">
    <property type="entry name" value="Tumor necrosis factor alpha-induced protein 8-like"/>
    <property type="match status" value="1"/>
</dbReference>
<dbReference type="InterPro" id="IPR008477">
    <property type="entry name" value="TNFAIP8-like"/>
</dbReference>
<dbReference type="InterPro" id="IPR038355">
    <property type="entry name" value="TNFAIP8_sf"/>
</dbReference>
<dbReference type="PANTHER" id="PTHR12757:SF3">
    <property type="entry name" value="TUMOR NECROSIS FACTOR ALPHA-INDUCED PROTEIN 8"/>
    <property type="match status" value="1"/>
</dbReference>
<dbReference type="PANTHER" id="PTHR12757">
    <property type="entry name" value="TUMOR NECROSIS FACTOR INDUCED PROTEIN"/>
    <property type="match status" value="1"/>
</dbReference>
<dbReference type="Pfam" id="PF05527">
    <property type="entry name" value="DUF758"/>
    <property type="match status" value="1"/>
</dbReference>
<feature type="chain" id="PRO_0000285721" description="Tumor necrosis factor alpha-induced protein 8">
    <location>
        <begin position="1"/>
        <end position="188"/>
    </location>
</feature>
<feature type="coiled-coil region" evidence="2">
    <location>
        <begin position="39"/>
        <end position="72"/>
    </location>
</feature>